<comment type="function">
    <text evidence="1">Catalyzes the condensation of ATP and 5-phosphoribose 1-diphosphate to form N'-(5'-phosphoribosyl)-ATP (PR-ATP). Has a crucial role in the pathway because the rate of histidine biosynthesis seems to be controlled primarily by regulation of HisG enzymatic activity.</text>
</comment>
<comment type="catalytic activity">
    <reaction evidence="1">
        <text>1-(5-phospho-beta-D-ribosyl)-ATP + diphosphate = 5-phospho-alpha-D-ribose 1-diphosphate + ATP</text>
        <dbReference type="Rhea" id="RHEA:18473"/>
        <dbReference type="ChEBI" id="CHEBI:30616"/>
        <dbReference type="ChEBI" id="CHEBI:33019"/>
        <dbReference type="ChEBI" id="CHEBI:58017"/>
        <dbReference type="ChEBI" id="CHEBI:73183"/>
        <dbReference type="EC" id="2.4.2.17"/>
    </reaction>
</comment>
<comment type="pathway">
    <text evidence="1">Amino-acid biosynthesis; L-histidine biosynthesis; L-histidine from 5-phospho-alpha-D-ribose 1-diphosphate: step 1/9.</text>
</comment>
<comment type="subunit">
    <text evidence="1">Heteromultimer composed of HisG and HisZ subunits.</text>
</comment>
<comment type="subcellular location">
    <subcellularLocation>
        <location evidence="1">Cytoplasm</location>
    </subcellularLocation>
</comment>
<comment type="domain">
    <text>Lacks the C-terminal regulatory region which is replaced by HisZ.</text>
</comment>
<comment type="similarity">
    <text evidence="1">Belongs to the ATP phosphoribosyltransferase family. Short subfamily.</text>
</comment>
<feature type="chain" id="PRO_1000084158" description="ATP phosphoribosyltransferase">
    <location>
        <begin position="1"/>
        <end position="216"/>
    </location>
</feature>
<reference key="1">
    <citation type="journal article" date="2007" name="DNA Res.">
        <title>Complete genomic structure of the bloom-forming toxic cyanobacterium Microcystis aeruginosa NIES-843.</title>
        <authorList>
            <person name="Kaneko T."/>
            <person name="Nakajima N."/>
            <person name="Okamoto S."/>
            <person name="Suzuki I."/>
            <person name="Tanabe Y."/>
            <person name="Tamaoki M."/>
            <person name="Nakamura Y."/>
            <person name="Kasai F."/>
            <person name="Watanabe A."/>
            <person name="Kawashima K."/>
            <person name="Kishida Y."/>
            <person name="Ono A."/>
            <person name="Shimizu Y."/>
            <person name="Takahashi C."/>
            <person name="Minami C."/>
            <person name="Fujishiro T."/>
            <person name="Kohara M."/>
            <person name="Katoh M."/>
            <person name="Nakazaki N."/>
            <person name="Nakayama S."/>
            <person name="Yamada M."/>
            <person name="Tabata S."/>
            <person name="Watanabe M.M."/>
        </authorList>
    </citation>
    <scope>NUCLEOTIDE SEQUENCE [LARGE SCALE GENOMIC DNA]</scope>
    <source>
        <strain>NIES-843 / IAM M-247</strain>
    </source>
</reference>
<dbReference type="EC" id="2.4.2.17" evidence="1"/>
<dbReference type="EMBL" id="AP009552">
    <property type="protein sequence ID" value="BAG05942.1"/>
    <property type="molecule type" value="Genomic_DNA"/>
</dbReference>
<dbReference type="RefSeq" id="WP_002797253.1">
    <property type="nucleotide sequence ID" value="NC_010296.1"/>
</dbReference>
<dbReference type="SMR" id="B0JK88"/>
<dbReference type="STRING" id="449447.MAE_61200"/>
<dbReference type="PaxDb" id="449447-MAE_61200"/>
<dbReference type="EnsemblBacteria" id="BAG05942">
    <property type="protein sequence ID" value="BAG05942"/>
    <property type="gene ID" value="MAE_61200"/>
</dbReference>
<dbReference type="KEGG" id="mar:MAE_61200"/>
<dbReference type="eggNOG" id="COG0040">
    <property type="taxonomic scope" value="Bacteria"/>
</dbReference>
<dbReference type="HOGENOM" id="CLU_038115_2_0_3"/>
<dbReference type="BioCyc" id="MAER449447:MAE_RS26720-MONOMER"/>
<dbReference type="UniPathway" id="UPA00031">
    <property type="reaction ID" value="UER00006"/>
</dbReference>
<dbReference type="Proteomes" id="UP000001510">
    <property type="component" value="Chromosome"/>
</dbReference>
<dbReference type="GO" id="GO:0005737">
    <property type="term" value="C:cytoplasm"/>
    <property type="evidence" value="ECO:0007669"/>
    <property type="project" value="UniProtKB-SubCell"/>
</dbReference>
<dbReference type="GO" id="GO:0005524">
    <property type="term" value="F:ATP binding"/>
    <property type="evidence" value="ECO:0007669"/>
    <property type="project" value="UniProtKB-KW"/>
</dbReference>
<dbReference type="GO" id="GO:0003879">
    <property type="term" value="F:ATP phosphoribosyltransferase activity"/>
    <property type="evidence" value="ECO:0007669"/>
    <property type="project" value="UniProtKB-UniRule"/>
</dbReference>
<dbReference type="GO" id="GO:0000105">
    <property type="term" value="P:L-histidine biosynthetic process"/>
    <property type="evidence" value="ECO:0007669"/>
    <property type="project" value="UniProtKB-UniRule"/>
</dbReference>
<dbReference type="CDD" id="cd13595">
    <property type="entry name" value="PBP2_HisGs"/>
    <property type="match status" value="1"/>
</dbReference>
<dbReference type="FunFam" id="3.40.190.10:FF:000008">
    <property type="entry name" value="ATP phosphoribosyltransferase"/>
    <property type="match status" value="1"/>
</dbReference>
<dbReference type="Gene3D" id="3.40.190.10">
    <property type="entry name" value="Periplasmic binding protein-like II"/>
    <property type="match status" value="2"/>
</dbReference>
<dbReference type="HAMAP" id="MF_01018">
    <property type="entry name" value="HisG_Short"/>
    <property type="match status" value="1"/>
</dbReference>
<dbReference type="InterPro" id="IPR013820">
    <property type="entry name" value="ATP_PRibTrfase_cat"/>
</dbReference>
<dbReference type="InterPro" id="IPR018198">
    <property type="entry name" value="ATP_PRibTrfase_CS"/>
</dbReference>
<dbReference type="InterPro" id="IPR001348">
    <property type="entry name" value="ATP_PRibTrfase_HisG"/>
</dbReference>
<dbReference type="InterPro" id="IPR024893">
    <property type="entry name" value="ATP_PRibTrfase_HisG_short"/>
</dbReference>
<dbReference type="NCBIfam" id="TIGR00070">
    <property type="entry name" value="hisG"/>
    <property type="match status" value="1"/>
</dbReference>
<dbReference type="PANTHER" id="PTHR21403:SF8">
    <property type="entry name" value="ATP PHOSPHORIBOSYLTRANSFERASE"/>
    <property type="match status" value="1"/>
</dbReference>
<dbReference type="PANTHER" id="PTHR21403">
    <property type="entry name" value="ATP PHOSPHORIBOSYLTRANSFERASE ATP-PRTASE"/>
    <property type="match status" value="1"/>
</dbReference>
<dbReference type="Pfam" id="PF01634">
    <property type="entry name" value="HisG"/>
    <property type="match status" value="1"/>
</dbReference>
<dbReference type="SUPFAM" id="SSF53850">
    <property type="entry name" value="Periplasmic binding protein-like II"/>
    <property type="match status" value="1"/>
</dbReference>
<dbReference type="PROSITE" id="PS01316">
    <property type="entry name" value="ATP_P_PHORIBOSYLTR"/>
    <property type="match status" value="1"/>
</dbReference>
<organism>
    <name type="scientific">Microcystis aeruginosa (strain NIES-843 / IAM M-2473)</name>
    <dbReference type="NCBI Taxonomy" id="449447"/>
    <lineage>
        <taxon>Bacteria</taxon>
        <taxon>Bacillati</taxon>
        <taxon>Cyanobacteriota</taxon>
        <taxon>Cyanophyceae</taxon>
        <taxon>Oscillatoriophycideae</taxon>
        <taxon>Chroococcales</taxon>
        <taxon>Microcystaceae</taxon>
        <taxon>Microcystis</taxon>
    </lineage>
</organism>
<protein>
    <recommendedName>
        <fullName evidence="1">ATP phosphoribosyltransferase</fullName>
        <shortName evidence="1">ATP-PRT</shortName>
        <shortName evidence="1">ATP-PRTase</shortName>
        <ecNumber evidence="1">2.4.2.17</ecNumber>
    </recommendedName>
</protein>
<proteinExistence type="inferred from homology"/>
<sequence>MLTIALPKGALLNESIQIFQKIGLDFSAFLDSKNRQLQITDPTNQAKALLVRATDVPVYVEYGQAQLGIAGYDVLLEKSPDVANLIDLKFGYCRMSVAVPADSPYQSPLDIPHHGKVASKFVNCAKDYFRRLDIPVEIIPLYGSVELGPITGMSEAIVDLVSTGRTLRENGLVEIDELFASSARLIAHPLSYRLDRDQIYNWVEKLREPTTSMAKV</sequence>
<name>HIS1_MICAN</name>
<gene>
    <name evidence="1" type="primary">hisG</name>
    <name type="ordered locus">MAE_61200</name>
</gene>
<accession>B0JK88</accession>
<evidence type="ECO:0000255" key="1">
    <source>
        <dbReference type="HAMAP-Rule" id="MF_01018"/>
    </source>
</evidence>
<keyword id="KW-0028">Amino-acid biosynthesis</keyword>
<keyword id="KW-0067">ATP-binding</keyword>
<keyword id="KW-0963">Cytoplasm</keyword>
<keyword id="KW-0328">Glycosyltransferase</keyword>
<keyword id="KW-0368">Histidine biosynthesis</keyword>
<keyword id="KW-0547">Nucleotide-binding</keyword>
<keyword id="KW-0808">Transferase</keyword>